<accession>P39661</accession>
<accession>Q31NU9</accession>
<organism>
    <name type="scientific">Synechococcus elongatus (strain ATCC 33912 / PCC 7942 / FACHB-805)</name>
    <name type="common">Anacystis nidulans R2</name>
    <dbReference type="NCBI Taxonomy" id="1140"/>
    <lineage>
        <taxon>Bacteria</taxon>
        <taxon>Bacillati</taxon>
        <taxon>Cyanobacteriota</taxon>
        <taxon>Cyanophyceae</taxon>
        <taxon>Synechococcales</taxon>
        <taxon>Synechococcaceae</taxon>
        <taxon>Synechococcus</taxon>
    </lineage>
</organism>
<evidence type="ECO:0000250" key="1"/>
<evidence type="ECO:0000305" key="2"/>
<proteinExistence type="inferred from homology"/>
<comment type="catalytic activity">
    <reaction>
        <text>6 oxidized [2Fe-2S]-[ferredoxin] + NH4(+) + 2 H2O = nitrite + 6 reduced [2Fe-2S]-[ferredoxin] + 8 H(+)</text>
        <dbReference type="Rhea" id="RHEA:18041"/>
        <dbReference type="Rhea" id="RHEA-COMP:10000"/>
        <dbReference type="Rhea" id="RHEA-COMP:10001"/>
        <dbReference type="ChEBI" id="CHEBI:15377"/>
        <dbReference type="ChEBI" id="CHEBI:15378"/>
        <dbReference type="ChEBI" id="CHEBI:16301"/>
        <dbReference type="ChEBI" id="CHEBI:28938"/>
        <dbReference type="ChEBI" id="CHEBI:33737"/>
        <dbReference type="ChEBI" id="CHEBI:33738"/>
        <dbReference type="EC" id="1.7.7.1"/>
    </reaction>
</comment>
<comment type="similarity">
    <text evidence="2">Belongs to the nitrite and sulfite reductase 4Fe-4S domain family.</text>
</comment>
<reference key="1">
    <citation type="submission" date="1992-07" db="EMBL/GenBank/DDBJ databases">
        <authorList>
            <person name="Omata T."/>
        </authorList>
    </citation>
    <scope>NUCLEOTIDE SEQUENCE [GENOMIC DNA]</scope>
</reference>
<reference key="2">
    <citation type="journal article" date="1993" name="Plant Mol. Biol.">
        <title>Nitrite reductase gene from Synechococcus sp. PCC 7942: homology between cyanobacterial and higher-plant nitrite reductases.</title>
        <authorList>
            <person name="Luque I."/>
            <person name="Flores E."/>
            <person name="Herrero A."/>
        </authorList>
    </citation>
    <scope>NUCLEOTIDE SEQUENCE [GENOMIC DNA]</scope>
</reference>
<reference key="3">
    <citation type="submission" date="2005-08" db="EMBL/GenBank/DDBJ databases">
        <title>Complete sequence of chromosome 1 of Synechococcus elongatus PCC 7942.</title>
        <authorList>
            <consortium name="US DOE Joint Genome Institute"/>
            <person name="Copeland A."/>
            <person name="Lucas S."/>
            <person name="Lapidus A."/>
            <person name="Barry K."/>
            <person name="Detter J.C."/>
            <person name="Glavina T."/>
            <person name="Hammon N."/>
            <person name="Israni S."/>
            <person name="Pitluck S."/>
            <person name="Schmutz J."/>
            <person name="Larimer F."/>
            <person name="Land M."/>
            <person name="Kyrpides N."/>
            <person name="Lykidis A."/>
            <person name="Golden S."/>
            <person name="Richardson P."/>
        </authorList>
    </citation>
    <scope>NUCLEOTIDE SEQUENCE [LARGE SCALE GENOMIC DNA]</scope>
    <source>
        <strain>ATCC 33912 / PCC 7942 / FACHB-805</strain>
    </source>
</reference>
<reference key="4">
    <citation type="journal article" date="1991" name="Plant Cell Physiol.">
        <title>Cloning and characterization of the nrtA gene that encodes a 45-kDa protein involved in nitrate transport in the cyanobacterium Synechococcus PCC 7942.</title>
        <authorList>
            <person name="Omata T."/>
        </authorList>
    </citation>
    <scope>NUCLEOTIDE SEQUENCE [GENOMIC DNA] OF 468-512</scope>
</reference>
<feature type="chain" id="PRO_0000199957" description="Ferredoxin--nitrite reductase">
    <location>
        <begin position="1"/>
        <end position="512"/>
    </location>
</feature>
<feature type="binding site" evidence="1">
    <location>
        <position position="396"/>
    </location>
    <ligand>
        <name>[4Fe-4S] cluster</name>
        <dbReference type="ChEBI" id="CHEBI:49883"/>
    </ligand>
</feature>
<feature type="binding site" evidence="1">
    <location>
        <position position="402"/>
    </location>
    <ligand>
        <name>[4Fe-4S] cluster</name>
        <dbReference type="ChEBI" id="CHEBI:49883"/>
    </ligand>
</feature>
<feature type="binding site" evidence="1">
    <location>
        <position position="437"/>
    </location>
    <ligand>
        <name>[4Fe-4S] cluster</name>
        <dbReference type="ChEBI" id="CHEBI:49883"/>
    </ligand>
</feature>
<feature type="binding site" evidence="1">
    <location>
        <position position="441"/>
    </location>
    <ligand>
        <name>[4Fe-4S] cluster</name>
        <dbReference type="ChEBI" id="CHEBI:49883"/>
    </ligand>
</feature>
<feature type="binding site" description="axial binding residue" evidence="1">
    <location>
        <position position="441"/>
    </location>
    <ligand>
        <name>siroheme</name>
        <dbReference type="ChEBI" id="CHEBI:60052"/>
    </ligand>
    <ligandPart>
        <name>Fe</name>
        <dbReference type="ChEBI" id="CHEBI:18248"/>
    </ligandPart>
</feature>
<protein>
    <recommendedName>
        <fullName>Ferredoxin--nitrite reductase</fullName>
        <ecNumber>1.7.7.1</ecNumber>
    </recommendedName>
</protein>
<keyword id="KW-0004">4Fe-4S</keyword>
<keyword id="KW-0249">Electron transport</keyword>
<keyword id="KW-0349">Heme</keyword>
<keyword id="KW-0408">Iron</keyword>
<keyword id="KW-0411">Iron-sulfur</keyword>
<keyword id="KW-0479">Metal-binding</keyword>
<keyword id="KW-0534">Nitrate assimilation</keyword>
<keyword id="KW-0560">Oxidoreductase</keyword>
<keyword id="KW-1185">Reference proteome</keyword>
<keyword id="KW-0813">Transport</keyword>
<sequence>MAQATATTEKLNKFEKLKLEKDGLAVRDQIQHFASIGWEAMDPGDREHRLKWLGIFWRPVTPGRFMARLRIPSGILQSQQLNALANFLQRYGDQASIDITTRQNLQLRGLLLEDTPEFLERLHAVGLTSVQSGMDNVRNITGSPVAGLDAAELFDTRSLIQALQDDLTAAGQGNSEFTNLPRKFNIAIEGGRDNSIHAEINDLAFTPAYQDGTLGFNVWVGGFFSSTRVAPAIPLNAWVPADHSVIRLSRAILEVFRDNGSRGNRQKTRLMWLIDEWGIERFRQVVSEAYGAPLAAAAPELMDWEKRDFLGVHPQKQAGLNFVGLHVPVGRLTTEDLYELARLADTYGQGEVRLTVEQNVILTHIPDAQLPTLLAEPLLTRFSPQPAPLSRGTVSCTGSQYCNFALIETKQRAIAIAQSLEAELDLPRPVRIHWTGCPNSCGQPQVADIGLMGAKVRKDGQMVEGVDIFLGGKVGYDAHLGEKAMTGVACEDLPDVLRQLLIERFGAQARSH</sequence>
<name>NIR_SYNE7</name>
<gene>
    <name type="primary">nirA</name>
    <name type="ordered locus">Synpcc7942_1240</name>
</gene>
<dbReference type="EC" id="1.7.7.1"/>
<dbReference type="EMBL" id="D12723">
    <property type="protein sequence ID" value="BAA02217.1"/>
    <property type="molecule type" value="Genomic_DNA"/>
</dbReference>
<dbReference type="EMBL" id="X67680">
    <property type="protein sequence ID" value="CAA47912.1"/>
    <property type="molecule type" value="Genomic_DNA"/>
</dbReference>
<dbReference type="EMBL" id="CP000100">
    <property type="protein sequence ID" value="ABB57270.1"/>
    <property type="molecule type" value="Genomic_DNA"/>
</dbReference>
<dbReference type="PIR" id="S33530">
    <property type="entry name" value="PQ0646"/>
</dbReference>
<dbReference type="RefSeq" id="WP_011242624.1">
    <property type="nucleotide sequence ID" value="NZ_JACJTX010000003.1"/>
</dbReference>
<dbReference type="SMR" id="P39661"/>
<dbReference type="STRING" id="1140.Synpcc7942_1240"/>
<dbReference type="PaxDb" id="1140-Synpcc7942_1240"/>
<dbReference type="KEGG" id="syf:Synpcc7942_1240"/>
<dbReference type="eggNOG" id="COG0155">
    <property type="taxonomic scope" value="Bacteria"/>
</dbReference>
<dbReference type="HOGENOM" id="CLU_015667_2_2_3"/>
<dbReference type="OrthoDB" id="9803707at2"/>
<dbReference type="BioCyc" id="MetaCyc:SYNPCC7942_1240-MONOMER"/>
<dbReference type="BioCyc" id="SYNEL:SYNPCC7942_1240-MONOMER"/>
<dbReference type="Proteomes" id="UP000889800">
    <property type="component" value="Chromosome"/>
</dbReference>
<dbReference type="GO" id="GO:0051539">
    <property type="term" value="F:4 iron, 4 sulfur cluster binding"/>
    <property type="evidence" value="ECO:0007669"/>
    <property type="project" value="UniProtKB-KW"/>
</dbReference>
<dbReference type="GO" id="GO:0048307">
    <property type="term" value="F:ferredoxin-nitrite reductase activity"/>
    <property type="evidence" value="ECO:0007669"/>
    <property type="project" value="UniProtKB-EC"/>
</dbReference>
<dbReference type="GO" id="GO:0020037">
    <property type="term" value="F:heme binding"/>
    <property type="evidence" value="ECO:0007669"/>
    <property type="project" value="InterPro"/>
</dbReference>
<dbReference type="GO" id="GO:0046872">
    <property type="term" value="F:metal ion binding"/>
    <property type="evidence" value="ECO:0007669"/>
    <property type="project" value="UniProtKB-KW"/>
</dbReference>
<dbReference type="GO" id="GO:0042128">
    <property type="term" value="P:nitrate assimilation"/>
    <property type="evidence" value="ECO:0007669"/>
    <property type="project" value="UniProtKB-KW"/>
</dbReference>
<dbReference type="Gene3D" id="3.90.480.20">
    <property type="match status" value="1"/>
</dbReference>
<dbReference type="Gene3D" id="3.30.413.10">
    <property type="entry name" value="Sulfite Reductase Hemoprotein, domain 1"/>
    <property type="match status" value="2"/>
</dbReference>
<dbReference type="InterPro" id="IPR012798">
    <property type="entry name" value="Cbl_synth_CobG-like"/>
</dbReference>
<dbReference type="InterPro" id="IPR051329">
    <property type="entry name" value="NIR_SIR_4Fe-4S"/>
</dbReference>
<dbReference type="InterPro" id="IPR005117">
    <property type="entry name" value="NiRdtase/SiRdtase_haem-b_fer"/>
</dbReference>
<dbReference type="InterPro" id="IPR036136">
    <property type="entry name" value="Nit/Sulf_reduc_fer-like_dom_sf"/>
</dbReference>
<dbReference type="InterPro" id="IPR006067">
    <property type="entry name" value="NO2/SO3_Rdtase_4Fe4S_dom"/>
</dbReference>
<dbReference type="InterPro" id="IPR045854">
    <property type="entry name" value="NO2/SO3_Rdtase_4Fe4S_sf"/>
</dbReference>
<dbReference type="InterPro" id="IPR006066">
    <property type="entry name" value="NO2/SO3_Rdtase_FeS/sirohaem_BS"/>
</dbReference>
<dbReference type="NCBIfam" id="TIGR02435">
    <property type="entry name" value="CobG"/>
    <property type="match status" value="1"/>
</dbReference>
<dbReference type="NCBIfam" id="NF007125">
    <property type="entry name" value="PRK09566.1"/>
    <property type="match status" value="1"/>
</dbReference>
<dbReference type="PANTHER" id="PTHR32439">
    <property type="entry name" value="FERREDOXIN--NITRITE REDUCTASE, CHLOROPLASTIC"/>
    <property type="match status" value="1"/>
</dbReference>
<dbReference type="PANTHER" id="PTHR32439:SF0">
    <property type="entry name" value="FERREDOXIN--NITRITE REDUCTASE, CHLOROPLASTIC"/>
    <property type="match status" value="1"/>
</dbReference>
<dbReference type="Pfam" id="PF01077">
    <property type="entry name" value="NIR_SIR"/>
    <property type="match status" value="2"/>
</dbReference>
<dbReference type="Pfam" id="PF03460">
    <property type="entry name" value="NIR_SIR_ferr"/>
    <property type="match status" value="2"/>
</dbReference>
<dbReference type="PRINTS" id="PR00397">
    <property type="entry name" value="SIROHAEM"/>
</dbReference>
<dbReference type="SUPFAM" id="SSF56014">
    <property type="entry name" value="Nitrite and sulphite reductase 4Fe-4S domain-like"/>
    <property type="match status" value="2"/>
</dbReference>
<dbReference type="SUPFAM" id="SSF55124">
    <property type="entry name" value="Nitrite/Sulfite reductase N-terminal domain-like"/>
    <property type="match status" value="2"/>
</dbReference>
<dbReference type="PROSITE" id="PS00365">
    <property type="entry name" value="NIR_SIR"/>
    <property type="match status" value="1"/>
</dbReference>